<protein>
    <recommendedName>
        <fullName evidence="1">Small ribosomal subunit protein bS21</fullName>
    </recommendedName>
    <alternativeName>
        <fullName evidence="3">30S ribosomal protein S21</fullName>
    </alternativeName>
</protein>
<sequence length="71" mass="8614">MPSVKVRENEPFEFALRRFKRTCEKAGVLAETRKREFYEKPTQERKRKAAAAVKRQLRRSSRDVTKRQRLY</sequence>
<feature type="chain" id="PRO_0000266797" description="Small ribosomal subunit protein bS21">
    <location>
        <begin position="1"/>
        <end position="71"/>
    </location>
</feature>
<feature type="region of interest" description="Disordered" evidence="2">
    <location>
        <begin position="39"/>
        <end position="71"/>
    </location>
</feature>
<feature type="compositionally biased region" description="Basic residues" evidence="2">
    <location>
        <begin position="45"/>
        <end position="59"/>
    </location>
</feature>
<feature type="compositionally biased region" description="Basic and acidic residues" evidence="2">
    <location>
        <begin position="60"/>
        <end position="71"/>
    </location>
</feature>
<accession>Q4UPU4</accession>
<organism>
    <name type="scientific">Xanthomonas campestris pv. campestris (strain 8004)</name>
    <dbReference type="NCBI Taxonomy" id="314565"/>
    <lineage>
        <taxon>Bacteria</taxon>
        <taxon>Pseudomonadati</taxon>
        <taxon>Pseudomonadota</taxon>
        <taxon>Gammaproteobacteria</taxon>
        <taxon>Lysobacterales</taxon>
        <taxon>Lysobacteraceae</taxon>
        <taxon>Xanthomonas</taxon>
    </lineage>
</organism>
<reference key="1">
    <citation type="journal article" date="2005" name="Genome Res.">
        <title>Comparative and functional genomic analyses of the pathogenicity of phytopathogen Xanthomonas campestris pv. campestris.</title>
        <authorList>
            <person name="Qian W."/>
            <person name="Jia Y."/>
            <person name="Ren S.-X."/>
            <person name="He Y.-Q."/>
            <person name="Feng J.-X."/>
            <person name="Lu L.-F."/>
            <person name="Sun Q."/>
            <person name="Ying G."/>
            <person name="Tang D.-J."/>
            <person name="Tang H."/>
            <person name="Wu W."/>
            <person name="Hao P."/>
            <person name="Wang L."/>
            <person name="Jiang B.-L."/>
            <person name="Zeng S."/>
            <person name="Gu W.-Y."/>
            <person name="Lu G."/>
            <person name="Rong L."/>
            <person name="Tian Y."/>
            <person name="Yao Z."/>
            <person name="Fu G."/>
            <person name="Chen B."/>
            <person name="Fang R."/>
            <person name="Qiang B."/>
            <person name="Chen Z."/>
            <person name="Zhao G.-P."/>
            <person name="Tang J.-L."/>
            <person name="He C."/>
        </authorList>
    </citation>
    <scope>NUCLEOTIDE SEQUENCE [LARGE SCALE GENOMIC DNA]</scope>
    <source>
        <strain>8004</strain>
    </source>
</reference>
<proteinExistence type="inferred from homology"/>
<keyword id="KW-0687">Ribonucleoprotein</keyword>
<keyword id="KW-0689">Ribosomal protein</keyword>
<gene>
    <name evidence="1" type="primary">rpsU</name>
    <name type="ordered locus">XC_3889</name>
</gene>
<dbReference type="EMBL" id="CP000050">
    <property type="protein sequence ID" value="AAY50929.1"/>
    <property type="molecule type" value="Genomic_DNA"/>
</dbReference>
<dbReference type="RefSeq" id="WP_002808376.1">
    <property type="nucleotide sequence ID" value="NZ_CP155948.1"/>
</dbReference>
<dbReference type="SMR" id="Q4UPU4"/>
<dbReference type="GeneID" id="97512051"/>
<dbReference type="KEGG" id="xcb:XC_3889"/>
<dbReference type="HOGENOM" id="CLU_159258_1_0_6"/>
<dbReference type="Proteomes" id="UP000000420">
    <property type="component" value="Chromosome"/>
</dbReference>
<dbReference type="GO" id="GO:1990904">
    <property type="term" value="C:ribonucleoprotein complex"/>
    <property type="evidence" value="ECO:0007669"/>
    <property type="project" value="UniProtKB-KW"/>
</dbReference>
<dbReference type="GO" id="GO:0005840">
    <property type="term" value="C:ribosome"/>
    <property type="evidence" value="ECO:0007669"/>
    <property type="project" value="UniProtKB-KW"/>
</dbReference>
<dbReference type="GO" id="GO:0003735">
    <property type="term" value="F:structural constituent of ribosome"/>
    <property type="evidence" value="ECO:0007669"/>
    <property type="project" value="InterPro"/>
</dbReference>
<dbReference type="GO" id="GO:0006412">
    <property type="term" value="P:translation"/>
    <property type="evidence" value="ECO:0007669"/>
    <property type="project" value="UniProtKB-UniRule"/>
</dbReference>
<dbReference type="Gene3D" id="1.20.5.1150">
    <property type="entry name" value="Ribosomal protein S8"/>
    <property type="match status" value="1"/>
</dbReference>
<dbReference type="HAMAP" id="MF_00358">
    <property type="entry name" value="Ribosomal_bS21"/>
    <property type="match status" value="1"/>
</dbReference>
<dbReference type="InterPro" id="IPR001911">
    <property type="entry name" value="Ribosomal_bS21"/>
</dbReference>
<dbReference type="InterPro" id="IPR018278">
    <property type="entry name" value="Ribosomal_bS21_CS"/>
</dbReference>
<dbReference type="InterPro" id="IPR038380">
    <property type="entry name" value="Ribosomal_bS21_sf"/>
</dbReference>
<dbReference type="NCBIfam" id="TIGR00030">
    <property type="entry name" value="S21p"/>
    <property type="match status" value="1"/>
</dbReference>
<dbReference type="PANTHER" id="PTHR21109">
    <property type="entry name" value="MITOCHONDRIAL 28S RIBOSOMAL PROTEIN S21"/>
    <property type="match status" value="1"/>
</dbReference>
<dbReference type="PANTHER" id="PTHR21109:SF22">
    <property type="entry name" value="SMALL RIBOSOMAL SUBUNIT PROTEIN BS21"/>
    <property type="match status" value="1"/>
</dbReference>
<dbReference type="Pfam" id="PF01165">
    <property type="entry name" value="Ribosomal_S21"/>
    <property type="match status" value="1"/>
</dbReference>
<dbReference type="PRINTS" id="PR00976">
    <property type="entry name" value="RIBOSOMALS21"/>
</dbReference>
<dbReference type="PROSITE" id="PS01181">
    <property type="entry name" value="RIBOSOMAL_S21"/>
    <property type="match status" value="1"/>
</dbReference>
<evidence type="ECO:0000255" key="1">
    <source>
        <dbReference type="HAMAP-Rule" id="MF_00358"/>
    </source>
</evidence>
<evidence type="ECO:0000256" key="2">
    <source>
        <dbReference type="SAM" id="MobiDB-lite"/>
    </source>
</evidence>
<evidence type="ECO:0000305" key="3"/>
<comment type="similarity">
    <text evidence="1">Belongs to the bacterial ribosomal protein bS21 family.</text>
</comment>
<name>RS21_XANC8</name>